<protein>
    <recommendedName>
        <fullName evidence="1">Outer membrane protein A</fullName>
    </recommendedName>
    <alternativeName>
        <fullName evidence="1">Outer membrane porin A</fullName>
    </alternativeName>
</protein>
<evidence type="ECO:0000255" key="1">
    <source>
        <dbReference type="HAMAP-Rule" id="MF_00842"/>
    </source>
</evidence>
<gene>
    <name evidence="1" type="primary">ompA</name>
</gene>
<sequence>MKKTAIAITVALAGFATVAQAAPKDNTWYTGAKLGWSQYHDTGFIDNNGPTHENQLGAGAFGGYQVNPYVGFEMGYDWLGRMPYKGSVENGAYKAQGVQLTAKLGYPITDDLDVYTRLGGMVWRADTKAHNNVTGESEKNHDTGVSPVFAGGVEWAITPEIATRLEYQWTNNIGDAHTIGTRPDNGLLSLGVSYRFGQGEAAPVVAPAPAPAPEVQTKHFTLKSDVLFNFNKATLKPEGQAALDQLYSQLSNLDPKDGSVVVLGYTDRIGSDAYNQGLSERRAQSVVDYLISKGIPADKISARGMGESNPVTGNTCDNVKQRAALIDCLAPDRRVEIEVKGIKDVVTQPQA</sequence>
<reference key="1">
    <citation type="journal article" date="1982" name="Nucleic Acids Res.">
        <title>The nucleotide sequence coding for major outer membrane protein OmpA of Shigella dysenteriae.</title>
        <authorList>
            <person name="Braun G."/>
            <person name="Cole S.T."/>
        </authorList>
    </citation>
    <scope>NUCLEOTIDE SEQUENCE [GENOMIC DNA]</scope>
</reference>
<accession>P02935</accession>
<name>OMPA_SHIDY</name>
<feature type="signal peptide" evidence="1">
    <location>
        <begin position="1"/>
        <end position="21"/>
    </location>
</feature>
<feature type="chain" id="PRO_0000020101" description="Outer membrane protein A" evidence="1">
    <location>
        <begin position="22"/>
        <end position="351"/>
    </location>
</feature>
<feature type="transmembrane region" description="Beta stranded" evidence="1">
    <location>
        <begin position="27"/>
        <end position="37"/>
    </location>
</feature>
<feature type="transmembrane region" description="Beta stranded" evidence="1">
    <location>
        <begin position="55"/>
        <end position="66"/>
    </location>
</feature>
<feature type="transmembrane region" description="Beta stranded" evidence="1">
    <location>
        <begin position="70"/>
        <end position="78"/>
    </location>
</feature>
<feature type="transmembrane region" description="Beta stranded" evidence="1">
    <location>
        <begin position="96"/>
        <end position="107"/>
    </location>
</feature>
<feature type="transmembrane region" description="Beta stranded" evidence="1">
    <location>
        <begin position="112"/>
        <end position="120"/>
    </location>
</feature>
<feature type="transmembrane region" description="Beta stranded" evidence="1">
    <location>
        <begin position="147"/>
        <end position="156"/>
    </location>
</feature>
<feature type="transmembrane region" description="Beta stranded" evidence="1">
    <location>
        <begin position="161"/>
        <end position="168"/>
    </location>
</feature>
<feature type="transmembrane region" description="Beta stranded" evidence="1">
    <location>
        <begin position="187"/>
        <end position="195"/>
    </location>
</feature>
<feature type="repeat" description="1">
    <location>
        <begin position="206"/>
        <end position="207"/>
    </location>
</feature>
<feature type="repeat" description="2">
    <location>
        <begin position="208"/>
        <end position="209"/>
    </location>
</feature>
<feature type="repeat" description="3">
    <location>
        <begin position="210"/>
        <end position="211"/>
    </location>
</feature>
<feature type="repeat" description="4">
    <location>
        <begin position="212"/>
        <end position="213"/>
    </location>
</feature>
<feature type="domain" description="OmpA-like" evidence="1">
    <location>
        <begin position="215"/>
        <end position="343"/>
    </location>
</feature>
<feature type="region of interest" description="4 X 2 AA tandem repeats of A-P">
    <location>
        <begin position="206"/>
        <end position="213"/>
    </location>
</feature>
<feature type="site" description="Part of salt bridge gating mechanism" evidence="1">
    <location>
        <position position="73"/>
    </location>
</feature>
<feature type="site" description="Part of salt bridge gating mechanism" evidence="1">
    <location>
        <position position="164"/>
    </location>
</feature>
<feature type="disulfide bond" evidence="1">
    <location>
        <begin position="316"/>
        <end position="328"/>
    </location>
</feature>
<organism>
    <name type="scientific">Shigella dysenteriae</name>
    <dbReference type="NCBI Taxonomy" id="622"/>
    <lineage>
        <taxon>Bacteria</taxon>
        <taxon>Pseudomonadati</taxon>
        <taxon>Pseudomonadota</taxon>
        <taxon>Gammaproteobacteria</taxon>
        <taxon>Enterobacterales</taxon>
        <taxon>Enterobacteriaceae</taxon>
        <taxon>Shigella</taxon>
    </lineage>
</organism>
<dbReference type="EMBL" id="V01344">
    <property type="protein sequence ID" value="CAA24638.1"/>
    <property type="molecule type" value="Genomic_DNA"/>
</dbReference>
<dbReference type="PIR" id="A03435">
    <property type="entry name" value="MMEBAD"/>
</dbReference>
<dbReference type="RefSeq" id="WP_005020288.1">
    <property type="nucleotide sequence ID" value="NZ_UAUQ01000016.1"/>
</dbReference>
<dbReference type="BMRB" id="P02935"/>
<dbReference type="SMR" id="P02935"/>
<dbReference type="GO" id="GO:0009279">
    <property type="term" value="C:cell outer membrane"/>
    <property type="evidence" value="ECO:0007669"/>
    <property type="project" value="UniProtKB-SubCell"/>
</dbReference>
<dbReference type="GO" id="GO:0046930">
    <property type="term" value="C:pore complex"/>
    <property type="evidence" value="ECO:0007669"/>
    <property type="project" value="UniProtKB-KW"/>
</dbReference>
<dbReference type="GO" id="GO:0015288">
    <property type="term" value="F:porin activity"/>
    <property type="evidence" value="ECO:0007669"/>
    <property type="project" value="UniProtKB-UniRule"/>
</dbReference>
<dbReference type="GO" id="GO:0034220">
    <property type="term" value="P:monoatomic ion transmembrane transport"/>
    <property type="evidence" value="ECO:0007669"/>
    <property type="project" value="UniProtKB-UniRule"/>
</dbReference>
<dbReference type="CDD" id="cd07185">
    <property type="entry name" value="OmpA_C-like"/>
    <property type="match status" value="1"/>
</dbReference>
<dbReference type="FunFam" id="2.40.160.20:FF:000003">
    <property type="entry name" value="Outer membrane protein A"/>
    <property type="match status" value="1"/>
</dbReference>
<dbReference type="FunFam" id="3.30.1330.60:FF:000004">
    <property type="entry name" value="Outer membrane protein A"/>
    <property type="match status" value="1"/>
</dbReference>
<dbReference type="Gene3D" id="2.40.160.20">
    <property type="match status" value="1"/>
</dbReference>
<dbReference type="Gene3D" id="3.30.1330.60">
    <property type="entry name" value="OmpA-like domain"/>
    <property type="match status" value="1"/>
</dbReference>
<dbReference type="HAMAP" id="MF_00842">
    <property type="entry name" value="OmpA"/>
    <property type="match status" value="1"/>
</dbReference>
<dbReference type="InterPro" id="IPR050330">
    <property type="entry name" value="Bact_OuterMem_StrucFunc"/>
</dbReference>
<dbReference type="InterPro" id="IPR011250">
    <property type="entry name" value="OMP/PagP_b-brl"/>
</dbReference>
<dbReference type="InterPro" id="IPR006664">
    <property type="entry name" value="OMP_bac"/>
</dbReference>
<dbReference type="InterPro" id="IPR002368">
    <property type="entry name" value="OmpA"/>
</dbReference>
<dbReference type="InterPro" id="IPR006665">
    <property type="entry name" value="OmpA-like"/>
</dbReference>
<dbReference type="InterPro" id="IPR006690">
    <property type="entry name" value="OMPA-like_CS"/>
</dbReference>
<dbReference type="InterPro" id="IPR036737">
    <property type="entry name" value="OmpA-like_sf"/>
</dbReference>
<dbReference type="InterPro" id="IPR000498">
    <property type="entry name" value="OmpA-like_TM_dom"/>
</dbReference>
<dbReference type="NCBIfam" id="NF008071">
    <property type="entry name" value="PRK10808.1"/>
    <property type="match status" value="1"/>
</dbReference>
<dbReference type="PANTHER" id="PTHR30329:SF21">
    <property type="entry name" value="LIPOPROTEIN YIAD-RELATED"/>
    <property type="match status" value="1"/>
</dbReference>
<dbReference type="PANTHER" id="PTHR30329">
    <property type="entry name" value="STATOR ELEMENT OF FLAGELLAR MOTOR COMPLEX"/>
    <property type="match status" value="1"/>
</dbReference>
<dbReference type="Pfam" id="PF00691">
    <property type="entry name" value="OmpA"/>
    <property type="match status" value="1"/>
</dbReference>
<dbReference type="Pfam" id="PF01389">
    <property type="entry name" value="OmpA_membrane"/>
    <property type="match status" value="1"/>
</dbReference>
<dbReference type="PRINTS" id="PR01021">
    <property type="entry name" value="OMPADOMAIN"/>
</dbReference>
<dbReference type="PRINTS" id="PR01022">
    <property type="entry name" value="OUTRMMBRANEA"/>
</dbReference>
<dbReference type="SUPFAM" id="SSF56925">
    <property type="entry name" value="OMPA-like"/>
    <property type="match status" value="1"/>
</dbReference>
<dbReference type="SUPFAM" id="SSF103088">
    <property type="entry name" value="OmpA-like"/>
    <property type="match status" value="1"/>
</dbReference>
<dbReference type="PROSITE" id="PS01068">
    <property type="entry name" value="OMPA_1"/>
    <property type="match status" value="1"/>
</dbReference>
<dbReference type="PROSITE" id="PS51123">
    <property type="entry name" value="OMPA_2"/>
    <property type="match status" value="1"/>
</dbReference>
<comment type="function">
    <text evidence="1">With TolR probably plays a role in maintaining the position of the peptidoglycan cell wall in the periplasm. Acts as a porin with low permeability that allows slow penetration of small solutes; an internal gate slows down solute passage.</text>
</comment>
<comment type="function">
    <text evidence="1">Required for conjugation with F-type plasmids; probably serves as the mating receptor on recipient cells.</text>
</comment>
<comment type="subunit">
    <text evidence="1">Monomer and homodimer.</text>
</comment>
<comment type="subcellular location">
    <subcellularLocation>
        <location evidence="1">Cell outer membrane</location>
        <topology evidence="1">Multi-pass membrane protein</topology>
    </subcellularLocation>
</comment>
<comment type="domain">
    <text evidence="1">The extracellular loops are most variable in sequence, and in some bacteria confer sensitivity to phage and/or colicins.</text>
</comment>
<comment type="similarity">
    <text evidence="1">Belongs to the outer membrane OOP (TC 1.B.6) superfamily. OmpA family.</text>
</comment>
<proteinExistence type="inferred from homology"/>
<keyword id="KW-0998">Cell outer membrane</keyword>
<keyword id="KW-0184">Conjugation</keyword>
<keyword id="KW-1015">Disulfide bond</keyword>
<keyword id="KW-0406">Ion transport</keyword>
<keyword id="KW-0472">Membrane</keyword>
<keyword id="KW-0626">Porin</keyword>
<keyword id="KW-0677">Repeat</keyword>
<keyword id="KW-0732">Signal</keyword>
<keyword id="KW-0812">Transmembrane</keyword>
<keyword id="KW-1134">Transmembrane beta strand</keyword>
<keyword id="KW-0813">Transport</keyword>